<proteinExistence type="inferred from homology"/>
<comment type="function">
    <text evidence="1">F(1)F(0) ATP synthase produces ATP from ADP in the presence of a proton or sodium gradient. F-type ATPases consist of two structural domains, F(1) containing the extramembraneous catalytic core and F(0) containing the membrane proton channel, linked together by a central stalk and a peripheral stalk. During catalysis, ATP synthesis in the catalytic domain of F(1) is coupled via a rotary mechanism of the central stalk subunits to proton translocation.</text>
</comment>
<comment type="function">
    <text evidence="1">Component of the F(0) channel, it forms part of the peripheral stalk, linking F(1) to F(0).</text>
</comment>
<comment type="subunit">
    <text evidence="1">F-type ATPases have 2 components, F(1) - the catalytic core - and F(0) - the membrane proton channel. F(1) has five subunits: alpha(3), beta(3), gamma(1), delta(1), epsilon(1). F(0) has three main subunits: a(1), b(2) and c(10-14). The alpha and beta chains form an alternating ring which encloses part of the gamma chain. F(1) is attached to F(0) by a central stalk formed by the gamma and epsilon chains, while a peripheral stalk is formed by the delta and b chains.</text>
</comment>
<comment type="subcellular location">
    <subcellularLocation>
        <location evidence="1">Cell membrane</location>
        <topology evidence="1">Single-pass membrane protein</topology>
    </subcellularLocation>
</comment>
<comment type="similarity">
    <text evidence="1">Belongs to the ATPase B chain family.</text>
</comment>
<accession>Q4AAW1</accession>
<keyword id="KW-0066">ATP synthesis</keyword>
<keyword id="KW-1003">Cell membrane</keyword>
<keyword id="KW-0138">CF(0)</keyword>
<keyword id="KW-0375">Hydrogen ion transport</keyword>
<keyword id="KW-0406">Ion transport</keyword>
<keyword id="KW-0472">Membrane</keyword>
<keyword id="KW-0812">Transmembrane</keyword>
<keyword id="KW-1133">Transmembrane helix</keyword>
<keyword id="KW-0813">Transport</keyword>
<protein>
    <recommendedName>
        <fullName evidence="1">ATP synthase subunit b</fullName>
    </recommendedName>
    <alternativeName>
        <fullName evidence="1">ATP synthase F(0) sector subunit b</fullName>
    </alternativeName>
    <alternativeName>
        <fullName evidence="1">ATPase subunit I</fullName>
    </alternativeName>
    <alternativeName>
        <fullName evidence="1">F-type ATPase subunit b</fullName>
        <shortName evidence="1">F-ATPase subunit b</shortName>
    </alternativeName>
</protein>
<dbReference type="EMBL" id="AE017243">
    <property type="protein sequence ID" value="AAZ44139.2"/>
    <property type="molecule type" value="Genomic_DNA"/>
</dbReference>
<dbReference type="RefSeq" id="WP_044284739.1">
    <property type="nucleotide sequence ID" value="NC_007295.1"/>
</dbReference>
<dbReference type="SMR" id="Q4AAW1"/>
<dbReference type="GeneID" id="41334333"/>
<dbReference type="KEGG" id="mhj:MHJ_0045"/>
<dbReference type="eggNOG" id="COG0711">
    <property type="taxonomic scope" value="Bacteria"/>
</dbReference>
<dbReference type="HOGENOM" id="CLU_079215_4_3_14"/>
<dbReference type="OrthoDB" id="400556at2"/>
<dbReference type="Proteomes" id="UP000000548">
    <property type="component" value="Chromosome"/>
</dbReference>
<dbReference type="GO" id="GO:0005886">
    <property type="term" value="C:plasma membrane"/>
    <property type="evidence" value="ECO:0007669"/>
    <property type="project" value="UniProtKB-SubCell"/>
</dbReference>
<dbReference type="GO" id="GO:0045259">
    <property type="term" value="C:proton-transporting ATP synthase complex"/>
    <property type="evidence" value="ECO:0007669"/>
    <property type="project" value="UniProtKB-KW"/>
</dbReference>
<dbReference type="GO" id="GO:0046933">
    <property type="term" value="F:proton-transporting ATP synthase activity, rotational mechanism"/>
    <property type="evidence" value="ECO:0007669"/>
    <property type="project" value="UniProtKB-UniRule"/>
</dbReference>
<dbReference type="GO" id="GO:0046961">
    <property type="term" value="F:proton-transporting ATPase activity, rotational mechanism"/>
    <property type="evidence" value="ECO:0007669"/>
    <property type="project" value="TreeGrafter"/>
</dbReference>
<dbReference type="CDD" id="cd06503">
    <property type="entry name" value="ATP-synt_Fo_b"/>
    <property type="match status" value="1"/>
</dbReference>
<dbReference type="HAMAP" id="MF_01398">
    <property type="entry name" value="ATP_synth_b_bprime"/>
    <property type="match status" value="1"/>
</dbReference>
<dbReference type="InterPro" id="IPR002146">
    <property type="entry name" value="ATP_synth_b/b'su_bac/chlpt"/>
</dbReference>
<dbReference type="InterPro" id="IPR050059">
    <property type="entry name" value="ATP_synthase_B_chain"/>
</dbReference>
<dbReference type="PANTHER" id="PTHR33445">
    <property type="entry name" value="ATP SYNTHASE SUBUNIT B', CHLOROPLASTIC"/>
    <property type="match status" value="1"/>
</dbReference>
<dbReference type="PANTHER" id="PTHR33445:SF2">
    <property type="entry name" value="ATP SYNTHASE SUBUNIT B', CHLOROPLASTIC"/>
    <property type="match status" value="1"/>
</dbReference>
<dbReference type="Pfam" id="PF00430">
    <property type="entry name" value="ATP-synt_B"/>
    <property type="match status" value="1"/>
</dbReference>
<gene>
    <name evidence="1" type="primary">atpF</name>
    <name type="ordered locus">MHJ_0045</name>
</gene>
<name>ATPF_MESHJ</name>
<reference key="1">
    <citation type="journal article" date="2005" name="J. Bacteriol.">
        <title>Swine and poultry pathogens: the complete genome sequences of two strains of Mycoplasma hyopneumoniae and a strain of Mycoplasma synoviae.</title>
        <authorList>
            <person name="Vasconcelos A.T.R."/>
            <person name="Ferreira H.B."/>
            <person name="Bizarro C.V."/>
            <person name="Bonatto S.L."/>
            <person name="Carvalho M.O."/>
            <person name="Pinto P.M."/>
            <person name="Almeida D.F."/>
            <person name="Almeida L.G.P."/>
            <person name="Almeida R."/>
            <person name="Alves-Junior L."/>
            <person name="Assuncao E.N."/>
            <person name="Azevedo V.A.C."/>
            <person name="Bogo M.R."/>
            <person name="Brigido M.M."/>
            <person name="Brocchi M."/>
            <person name="Burity H.A."/>
            <person name="Camargo A.A."/>
            <person name="Camargo S.S."/>
            <person name="Carepo M.S."/>
            <person name="Carraro D.M."/>
            <person name="de Mattos Cascardo J.C."/>
            <person name="Castro L.A."/>
            <person name="Cavalcanti G."/>
            <person name="Chemale G."/>
            <person name="Collevatti R.G."/>
            <person name="Cunha C.W."/>
            <person name="Dallagiovanna B."/>
            <person name="Dambros B.P."/>
            <person name="Dellagostin O.A."/>
            <person name="Falcao C."/>
            <person name="Fantinatti-Garboggini F."/>
            <person name="Felipe M.S.S."/>
            <person name="Fiorentin L."/>
            <person name="Franco G.R."/>
            <person name="Freitas N.S.A."/>
            <person name="Frias D."/>
            <person name="Grangeiro T.B."/>
            <person name="Grisard E.C."/>
            <person name="Guimaraes C.T."/>
            <person name="Hungria M."/>
            <person name="Jardim S.N."/>
            <person name="Krieger M.A."/>
            <person name="Laurino J.P."/>
            <person name="Lima L.F.A."/>
            <person name="Lopes M.I."/>
            <person name="Loreto E.L.S."/>
            <person name="Madeira H.M.F."/>
            <person name="Manfio G.P."/>
            <person name="Maranhao A.Q."/>
            <person name="Martinkovics C.T."/>
            <person name="Medeiros S.R.B."/>
            <person name="Moreira M.A.M."/>
            <person name="Neiva M."/>
            <person name="Ramalho-Neto C.E."/>
            <person name="Nicolas M.F."/>
            <person name="Oliveira S.C."/>
            <person name="Paixao R.F.C."/>
            <person name="Pedrosa F.O."/>
            <person name="Pena S.D.J."/>
            <person name="Pereira M."/>
            <person name="Pereira-Ferrari L."/>
            <person name="Piffer I."/>
            <person name="Pinto L.S."/>
            <person name="Potrich D.P."/>
            <person name="Salim A.C.M."/>
            <person name="Santos F.R."/>
            <person name="Schmitt R."/>
            <person name="Schneider M.P.C."/>
            <person name="Schrank A."/>
            <person name="Schrank I.S."/>
            <person name="Schuck A.F."/>
            <person name="Seuanez H.N."/>
            <person name="Silva D.W."/>
            <person name="Silva R."/>
            <person name="Silva S.C."/>
            <person name="Soares C.M.A."/>
            <person name="Souza K.R.L."/>
            <person name="Souza R.C."/>
            <person name="Staats C.C."/>
            <person name="Steffens M.B.R."/>
            <person name="Teixeira S.M.R."/>
            <person name="Urmenyi T.P."/>
            <person name="Vainstein M.H."/>
            <person name="Zuccherato L.W."/>
            <person name="Simpson A.J.G."/>
            <person name="Zaha A."/>
        </authorList>
    </citation>
    <scope>NUCLEOTIDE SEQUENCE [LARGE SCALE GENOMIC DNA]</scope>
    <source>
        <strain>J / ATCC 25934 / NCTC 10110</strain>
    </source>
</reference>
<feature type="chain" id="PRO_0000368611" description="ATP synthase subunit b">
    <location>
        <begin position="1"/>
        <end position="188"/>
    </location>
</feature>
<feature type="transmembrane region" description="Helical" evidence="1">
    <location>
        <begin position="19"/>
        <end position="39"/>
    </location>
</feature>
<sequence length="188" mass="22074">MVNLNQSLGDLFKGIIPNVYVLGATIVSFLILFLFITYFVYRPLKKYIKKRKDFLQNHIDLTIKSNVEAEKLEKKSQQKLLETKEFCIELKEKSQIEANEFLEDAKKTAIDNARQLINEGQKVLLEYENEIKSKYYMNVINVAVEICQKYLEKQDKNNKILQQSLIADLEKELKKRENSSKKKDNFGK</sequence>
<organism>
    <name type="scientific">Mesomycoplasma hyopneumoniae (strain J / ATCC 25934 / NCTC 10110)</name>
    <name type="common">Mycoplasma hyopneumoniae</name>
    <dbReference type="NCBI Taxonomy" id="262719"/>
    <lineage>
        <taxon>Bacteria</taxon>
        <taxon>Bacillati</taxon>
        <taxon>Mycoplasmatota</taxon>
        <taxon>Mycoplasmoidales</taxon>
        <taxon>Metamycoplasmataceae</taxon>
        <taxon>Mesomycoplasma</taxon>
    </lineage>
</organism>
<evidence type="ECO:0000255" key="1">
    <source>
        <dbReference type="HAMAP-Rule" id="MF_01398"/>
    </source>
</evidence>